<sequence>MAVIKCKPTSPGRRHVVKVVNTDLHKGKPFAGLLAKKSKSGGRNNTGRITVRHVGGGHKQHYRLIDFKRDKDGIPAKIERLEYDPNRTANIALVLYADGERRYILAAKGMQAGDKIQSGVEAEIKTGNAMPLRNIPVGSVVHAVEMKPGKGAQIARSAGAYVQVVARDGAYATLRLRSGEMRKVPVDCRATFGEVGNAEHMLRQLGKAGAKRWRGIRPTVRGVAMNPVDHPHGGGEGRTSGGRHPVTPWGVPTKGYKTRSNKRTDKYIVRRRNK</sequence>
<gene>
    <name evidence="1" type="primary">rplB</name>
    <name type="ordered locus">Sputcn32_3756</name>
</gene>
<dbReference type="EMBL" id="CP000681">
    <property type="protein sequence ID" value="ABP77463.1"/>
    <property type="molecule type" value="Genomic_DNA"/>
</dbReference>
<dbReference type="SMR" id="A4YBY0"/>
<dbReference type="STRING" id="319224.Sputcn32_3756"/>
<dbReference type="KEGG" id="spc:Sputcn32_3756"/>
<dbReference type="eggNOG" id="COG0090">
    <property type="taxonomic scope" value="Bacteria"/>
</dbReference>
<dbReference type="HOGENOM" id="CLU_036235_2_1_6"/>
<dbReference type="GO" id="GO:0015934">
    <property type="term" value="C:large ribosomal subunit"/>
    <property type="evidence" value="ECO:0007669"/>
    <property type="project" value="InterPro"/>
</dbReference>
<dbReference type="GO" id="GO:0019843">
    <property type="term" value="F:rRNA binding"/>
    <property type="evidence" value="ECO:0007669"/>
    <property type="project" value="UniProtKB-UniRule"/>
</dbReference>
<dbReference type="GO" id="GO:0003735">
    <property type="term" value="F:structural constituent of ribosome"/>
    <property type="evidence" value="ECO:0007669"/>
    <property type="project" value="InterPro"/>
</dbReference>
<dbReference type="GO" id="GO:0016740">
    <property type="term" value="F:transferase activity"/>
    <property type="evidence" value="ECO:0007669"/>
    <property type="project" value="InterPro"/>
</dbReference>
<dbReference type="GO" id="GO:0002181">
    <property type="term" value="P:cytoplasmic translation"/>
    <property type="evidence" value="ECO:0007669"/>
    <property type="project" value="TreeGrafter"/>
</dbReference>
<dbReference type="FunFam" id="2.30.30.30:FF:000001">
    <property type="entry name" value="50S ribosomal protein L2"/>
    <property type="match status" value="1"/>
</dbReference>
<dbReference type="FunFam" id="2.40.50.140:FF:000003">
    <property type="entry name" value="50S ribosomal protein L2"/>
    <property type="match status" value="1"/>
</dbReference>
<dbReference type="FunFam" id="4.10.950.10:FF:000001">
    <property type="entry name" value="50S ribosomal protein L2"/>
    <property type="match status" value="1"/>
</dbReference>
<dbReference type="Gene3D" id="2.30.30.30">
    <property type="match status" value="1"/>
</dbReference>
<dbReference type="Gene3D" id="2.40.50.140">
    <property type="entry name" value="Nucleic acid-binding proteins"/>
    <property type="match status" value="1"/>
</dbReference>
<dbReference type="Gene3D" id="4.10.950.10">
    <property type="entry name" value="Ribosomal protein L2, domain 3"/>
    <property type="match status" value="1"/>
</dbReference>
<dbReference type="HAMAP" id="MF_01320_B">
    <property type="entry name" value="Ribosomal_uL2_B"/>
    <property type="match status" value="1"/>
</dbReference>
<dbReference type="InterPro" id="IPR012340">
    <property type="entry name" value="NA-bd_OB-fold"/>
</dbReference>
<dbReference type="InterPro" id="IPR014722">
    <property type="entry name" value="Rib_uL2_dom2"/>
</dbReference>
<dbReference type="InterPro" id="IPR002171">
    <property type="entry name" value="Ribosomal_uL2"/>
</dbReference>
<dbReference type="InterPro" id="IPR005880">
    <property type="entry name" value="Ribosomal_uL2_bac/org-type"/>
</dbReference>
<dbReference type="InterPro" id="IPR022669">
    <property type="entry name" value="Ribosomal_uL2_C"/>
</dbReference>
<dbReference type="InterPro" id="IPR022671">
    <property type="entry name" value="Ribosomal_uL2_CS"/>
</dbReference>
<dbReference type="InterPro" id="IPR014726">
    <property type="entry name" value="Ribosomal_uL2_dom3"/>
</dbReference>
<dbReference type="InterPro" id="IPR022666">
    <property type="entry name" value="Ribosomal_uL2_RNA-bd_dom"/>
</dbReference>
<dbReference type="InterPro" id="IPR008991">
    <property type="entry name" value="Translation_prot_SH3-like_sf"/>
</dbReference>
<dbReference type="NCBIfam" id="TIGR01171">
    <property type="entry name" value="rplB_bact"/>
    <property type="match status" value="1"/>
</dbReference>
<dbReference type="PANTHER" id="PTHR13691:SF5">
    <property type="entry name" value="LARGE RIBOSOMAL SUBUNIT PROTEIN UL2M"/>
    <property type="match status" value="1"/>
</dbReference>
<dbReference type="PANTHER" id="PTHR13691">
    <property type="entry name" value="RIBOSOMAL PROTEIN L2"/>
    <property type="match status" value="1"/>
</dbReference>
<dbReference type="Pfam" id="PF00181">
    <property type="entry name" value="Ribosomal_L2"/>
    <property type="match status" value="1"/>
</dbReference>
<dbReference type="Pfam" id="PF03947">
    <property type="entry name" value="Ribosomal_L2_C"/>
    <property type="match status" value="1"/>
</dbReference>
<dbReference type="PIRSF" id="PIRSF002158">
    <property type="entry name" value="Ribosomal_L2"/>
    <property type="match status" value="1"/>
</dbReference>
<dbReference type="SMART" id="SM01383">
    <property type="entry name" value="Ribosomal_L2"/>
    <property type="match status" value="1"/>
</dbReference>
<dbReference type="SMART" id="SM01382">
    <property type="entry name" value="Ribosomal_L2_C"/>
    <property type="match status" value="1"/>
</dbReference>
<dbReference type="SUPFAM" id="SSF50249">
    <property type="entry name" value="Nucleic acid-binding proteins"/>
    <property type="match status" value="1"/>
</dbReference>
<dbReference type="SUPFAM" id="SSF50104">
    <property type="entry name" value="Translation proteins SH3-like domain"/>
    <property type="match status" value="1"/>
</dbReference>
<dbReference type="PROSITE" id="PS00467">
    <property type="entry name" value="RIBOSOMAL_L2"/>
    <property type="match status" value="1"/>
</dbReference>
<proteinExistence type="inferred from homology"/>
<organism>
    <name type="scientific">Shewanella putrefaciens (strain CN-32 / ATCC BAA-453)</name>
    <dbReference type="NCBI Taxonomy" id="319224"/>
    <lineage>
        <taxon>Bacteria</taxon>
        <taxon>Pseudomonadati</taxon>
        <taxon>Pseudomonadota</taxon>
        <taxon>Gammaproteobacteria</taxon>
        <taxon>Alteromonadales</taxon>
        <taxon>Shewanellaceae</taxon>
        <taxon>Shewanella</taxon>
    </lineage>
</organism>
<feature type="chain" id="PRO_1000051952" description="Large ribosomal subunit protein uL2">
    <location>
        <begin position="1"/>
        <end position="274"/>
    </location>
</feature>
<feature type="region of interest" description="Disordered" evidence="2">
    <location>
        <begin position="223"/>
        <end position="274"/>
    </location>
</feature>
<evidence type="ECO:0000255" key="1">
    <source>
        <dbReference type="HAMAP-Rule" id="MF_01320"/>
    </source>
</evidence>
<evidence type="ECO:0000256" key="2">
    <source>
        <dbReference type="SAM" id="MobiDB-lite"/>
    </source>
</evidence>
<evidence type="ECO:0000305" key="3"/>
<name>RL2_SHEPC</name>
<accession>A4YBY0</accession>
<protein>
    <recommendedName>
        <fullName evidence="1">Large ribosomal subunit protein uL2</fullName>
    </recommendedName>
    <alternativeName>
        <fullName evidence="3">50S ribosomal protein L2</fullName>
    </alternativeName>
</protein>
<reference key="1">
    <citation type="submission" date="2007-04" db="EMBL/GenBank/DDBJ databases">
        <title>Complete sequence of Shewanella putrefaciens CN-32.</title>
        <authorList>
            <consortium name="US DOE Joint Genome Institute"/>
            <person name="Copeland A."/>
            <person name="Lucas S."/>
            <person name="Lapidus A."/>
            <person name="Barry K."/>
            <person name="Detter J.C."/>
            <person name="Glavina del Rio T."/>
            <person name="Hammon N."/>
            <person name="Israni S."/>
            <person name="Dalin E."/>
            <person name="Tice H."/>
            <person name="Pitluck S."/>
            <person name="Chain P."/>
            <person name="Malfatti S."/>
            <person name="Shin M."/>
            <person name="Vergez L."/>
            <person name="Schmutz J."/>
            <person name="Larimer F."/>
            <person name="Land M."/>
            <person name="Hauser L."/>
            <person name="Kyrpides N."/>
            <person name="Mikhailova N."/>
            <person name="Romine M.F."/>
            <person name="Fredrickson J."/>
            <person name="Tiedje J."/>
            <person name="Richardson P."/>
        </authorList>
    </citation>
    <scope>NUCLEOTIDE SEQUENCE [LARGE SCALE GENOMIC DNA]</scope>
    <source>
        <strain>CN-32 / ATCC BAA-453</strain>
    </source>
</reference>
<comment type="function">
    <text evidence="1">One of the primary rRNA binding proteins. Required for association of the 30S and 50S subunits to form the 70S ribosome, for tRNA binding and peptide bond formation. It has been suggested to have peptidyltransferase activity; this is somewhat controversial. Makes several contacts with the 16S rRNA in the 70S ribosome.</text>
</comment>
<comment type="subunit">
    <text evidence="1">Part of the 50S ribosomal subunit. Forms a bridge to the 30S subunit in the 70S ribosome.</text>
</comment>
<comment type="similarity">
    <text evidence="1">Belongs to the universal ribosomal protein uL2 family.</text>
</comment>
<keyword id="KW-0687">Ribonucleoprotein</keyword>
<keyword id="KW-0689">Ribosomal protein</keyword>
<keyword id="KW-0694">RNA-binding</keyword>
<keyword id="KW-0699">rRNA-binding</keyword>